<gene>
    <name type="ordered locus">PSHAa1175</name>
</gene>
<feature type="chain" id="PRO_0000282244" description="UPF0060 membrane protein PSHAa1175">
    <location>
        <begin position="1"/>
        <end position="107"/>
    </location>
</feature>
<feature type="transmembrane region" description="Helical" evidence="1">
    <location>
        <begin position="3"/>
        <end position="23"/>
    </location>
</feature>
<feature type="transmembrane region" description="Helical" evidence="1">
    <location>
        <begin position="30"/>
        <end position="50"/>
    </location>
</feature>
<feature type="transmembrane region" description="Helical" evidence="1">
    <location>
        <begin position="60"/>
        <end position="80"/>
    </location>
</feature>
<feature type="transmembrane region" description="Helical" evidence="1">
    <location>
        <begin position="84"/>
        <end position="104"/>
    </location>
</feature>
<name>Y1175_PSET1</name>
<reference key="1">
    <citation type="journal article" date="2005" name="Genome Res.">
        <title>Coping with cold: the genome of the versatile marine Antarctica bacterium Pseudoalteromonas haloplanktis TAC125.</title>
        <authorList>
            <person name="Medigue C."/>
            <person name="Krin E."/>
            <person name="Pascal G."/>
            <person name="Barbe V."/>
            <person name="Bernsel A."/>
            <person name="Bertin P.N."/>
            <person name="Cheung F."/>
            <person name="Cruveiller S."/>
            <person name="D'Amico S."/>
            <person name="Duilio A."/>
            <person name="Fang G."/>
            <person name="Feller G."/>
            <person name="Ho C."/>
            <person name="Mangenot S."/>
            <person name="Marino G."/>
            <person name="Nilsson J."/>
            <person name="Parrilli E."/>
            <person name="Rocha E.P.C."/>
            <person name="Rouy Z."/>
            <person name="Sekowska A."/>
            <person name="Tutino M.L."/>
            <person name="Vallenet D."/>
            <person name="von Heijne G."/>
            <person name="Danchin A."/>
        </authorList>
    </citation>
    <scope>NUCLEOTIDE SEQUENCE [LARGE SCALE GENOMIC DNA]</scope>
    <source>
        <strain>TAC 125</strain>
    </source>
</reference>
<evidence type="ECO:0000255" key="1">
    <source>
        <dbReference type="HAMAP-Rule" id="MF_00010"/>
    </source>
</evidence>
<proteinExistence type="inferred from homology"/>
<comment type="subcellular location">
    <subcellularLocation>
        <location evidence="1">Cell inner membrane</location>
        <topology evidence="1">Multi-pass membrane protein</topology>
    </subcellularLocation>
</comment>
<comment type="similarity">
    <text evidence="1">Belongs to the UPF0060 family.</text>
</comment>
<accession>Q3IKL0</accession>
<sequence>MKIFGLFLITALAEIIGCYLPYLWLREGKSVWLLVPAALSLAIFAWLLSLHPAAAGRVYAAYGGVYIFMAILWLWAVDGIRPTTWDLVGSGVALVGMAIIMFAPRSV</sequence>
<keyword id="KW-0997">Cell inner membrane</keyword>
<keyword id="KW-1003">Cell membrane</keyword>
<keyword id="KW-0472">Membrane</keyword>
<keyword id="KW-1185">Reference proteome</keyword>
<keyword id="KW-0812">Transmembrane</keyword>
<keyword id="KW-1133">Transmembrane helix</keyword>
<dbReference type="EMBL" id="CR954246">
    <property type="protein sequence ID" value="CAI86250.1"/>
    <property type="molecule type" value="Genomic_DNA"/>
</dbReference>
<dbReference type="SMR" id="Q3IKL0"/>
<dbReference type="STRING" id="326442.PSHAa1175"/>
<dbReference type="KEGG" id="pha:PSHAa1175"/>
<dbReference type="eggNOG" id="COG1742">
    <property type="taxonomic scope" value="Bacteria"/>
</dbReference>
<dbReference type="HOGENOM" id="CLU_117653_2_0_6"/>
<dbReference type="Proteomes" id="UP000006843">
    <property type="component" value="Chromosome I"/>
</dbReference>
<dbReference type="GO" id="GO:0005886">
    <property type="term" value="C:plasma membrane"/>
    <property type="evidence" value="ECO:0007669"/>
    <property type="project" value="UniProtKB-SubCell"/>
</dbReference>
<dbReference type="HAMAP" id="MF_00010">
    <property type="entry name" value="UPF0060"/>
    <property type="match status" value="1"/>
</dbReference>
<dbReference type="InterPro" id="IPR003844">
    <property type="entry name" value="UPF0060"/>
</dbReference>
<dbReference type="NCBIfam" id="NF002586">
    <property type="entry name" value="PRK02237.1"/>
    <property type="match status" value="1"/>
</dbReference>
<dbReference type="PANTHER" id="PTHR36116">
    <property type="entry name" value="UPF0060 MEMBRANE PROTEIN YNFA"/>
    <property type="match status" value="1"/>
</dbReference>
<dbReference type="PANTHER" id="PTHR36116:SF1">
    <property type="entry name" value="UPF0060 MEMBRANE PROTEIN YNFA"/>
    <property type="match status" value="1"/>
</dbReference>
<dbReference type="Pfam" id="PF02694">
    <property type="entry name" value="UPF0060"/>
    <property type="match status" value="1"/>
</dbReference>
<dbReference type="SUPFAM" id="SSF103481">
    <property type="entry name" value="Multidrug resistance efflux transporter EmrE"/>
    <property type="match status" value="1"/>
</dbReference>
<organism>
    <name type="scientific">Pseudoalteromonas translucida (strain TAC 125)</name>
    <dbReference type="NCBI Taxonomy" id="326442"/>
    <lineage>
        <taxon>Bacteria</taxon>
        <taxon>Pseudomonadati</taxon>
        <taxon>Pseudomonadota</taxon>
        <taxon>Gammaproteobacteria</taxon>
        <taxon>Alteromonadales</taxon>
        <taxon>Pseudoalteromonadaceae</taxon>
        <taxon>Pseudoalteromonas</taxon>
    </lineage>
</organism>
<protein>
    <recommendedName>
        <fullName evidence="1">UPF0060 membrane protein PSHAa1175</fullName>
    </recommendedName>
</protein>